<dbReference type="EMBL" id="CR382136">
    <property type="protein sequence ID" value="CAG86815.2"/>
    <property type="molecule type" value="Genomic_DNA"/>
</dbReference>
<dbReference type="RefSeq" id="XP_458676.2">
    <property type="nucleotide sequence ID" value="XM_458676.1"/>
</dbReference>
<dbReference type="STRING" id="284592.Q6BSZ4"/>
<dbReference type="GeneID" id="2901330"/>
<dbReference type="KEGG" id="dha:DEHA2D04796g"/>
<dbReference type="VEuPathDB" id="FungiDB:DEHA2D04796g"/>
<dbReference type="eggNOG" id="KOG1721">
    <property type="taxonomic scope" value="Eukaryota"/>
</dbReference>
<dbReference type="HOGENOM" id="CLU_028624_0_0_1"/>
<dbReference type="InParanoid" id="Q6BSZ4"/>
<dbReference type="OMA" id="NFHNISA"/>
<dbReference type="OrthoDB" id="6155966at2759"/>
<dbReference type="Proteomes" id="UP000000599">
    <property type="component" value="Chromosome D"/>
</dbReference>
<dbReference type="GO" id="GO:0005737">
    <property type="term" value="C:cytoplasm"/>
    <property type="evidence" value="ECO:0007669"/>
    <property type="project" value="UniProtKB-SubCell"/>
</dbReference>
<dbReference type="GO" id="GO:0005634">
    <property type="term" value="C:nucleus"/>
    <property type="evidence" value="ECO:0007669"/>
    <property type="project" value="UniProtKB-SubCell"/>
</dbReference>
<dbReference type="GO" id="GO:0003677">
    <property type="term" value="F:DNA binding"/>
    <property type="evidence" value="ECO:0007669"/>
    <property type="project" value="UniProtKB-KW"/>
</dbReference>
<dbReference type="GO" id="GO:0008270">
    <property type="term" value="F:zinc ion binding"/>
    <property type="evidence" value="ECO:0007669"/>
    <property type="project" value="UniProtKB-KW"/>
</dbReference>
<dbReference type="GO" id="GO:0045944">
    <property type="term" value="P:positive regulation of transcription by RNA polymerase II"/>
    <property type="evidence" value="ECO:0007669"/>
    <property type="project" value="TreeGrafter"/>
</dbReference>
<dbReference type="FunFam" id="3.30.160.60:FF:001289">
    <property type="entry name" value="Zinc finger protein 574"/>
    <property type="match status" value="1"/>
</dbReference>
<dbReference type="Gene3D" id="3.30.160.60">
    <property type="entry name" value="Classic Zinc Finger"/>
    <property type="match status" value="2"/>
</dbReference>
<dbReference type="InterPro" id="IPR050806">
    <property type="entry name" value="pacC/RIM101"/>
</dbReference>
<dbReference type="InterPro" id="IPR036236">
    <property type="entry name" value="Znf_C2H2_sf"/>
</dbReference>
<dbReference type="InterPro" id="IPR013087">
    <property type="entry name" value="Znf_C2H2_type"/>
</dbReference>
<dbReference type="PANTHER" id="PTHR47257">
    <property type="entry name" value="PH-RESPONSE TRANSCRIPTION FACTOR PACC/RIM101"/>
    <property type="match status" value="1"/>
</dbReference>
<dbReference type="PANTHER" id="PTHR47257:SF1">
    <property type="entry name" value="PH-RESPONSE TRANSCRIPTION FACTOR PACC_RIM101"/>
    <property type="match status" value="1"/>
</dbReference>
<dbReference type="SMART" id="SM00355">
    <property type="entry name" value="ZnF_C2H2"/>
    <property type="match status" value="3"/>
</dbReference>
<dbReference type="SUPFAM" id="SSF57667">
    <property type="entry name" value="beta-beta-alpha zinc fingers"/>
    <property type="match status" value="1"/>
</dbReference>
<dbReference type="PROSITE" id="PS00028">
    <property type="entry name" value="ZINC_FINGER_C2H2_1"/>
    <property type="match status" value="2"/>
</dbReference>
<dbReference type="PROSITE" id="PS50157">
    <property type="entry name" value="ZINC_FINGER_C2H2_2"/>
    <property type="match status" value="3"/>
</dbReference>
<proteinExistence type="inferred from homology"/>
<sequence length="617" mass="70169">MSFNLHPISYLDADTNAGRPGNDQGTGNGHGHGAGHEHGNGYRMFDSDLNLDIDGISTGSPLTSSQSTNDSPQSSFTSQSSENSPHQKGEYMKFFGEGDKDIRGSGLSEGSYDVPTMIVEDEGSVETKIAGGETTSGVDRDDGSVKPKKIYRKVKDEDMKGPFKCHWNDCAVIFDTPELLYDHLCDDHVGRKSSNNLSLTCYWDNCLVTTVKRDHITSHLRVHVPLKPFHCDVCPKSFKRPQDLKKHSKIHADDHPKKLKKAHRRQQEEHDHEREYEHEHEHEQEQYRQSHFHNPSHSQPQSQSHQFQTMQPYPFDNMLNYDINYQMYPSMQSDMAMMNDGVDRKRRFDNGNNNMVNNILNDFNFHNISAMAPDYSNKKVKVEPSYNLDMFNKLNSFDDRYISSHPHQHQAQAPPHHAHPQHQQQQYPNNVNSQNLLEAEKFFNSLSSSIDLQYQKLSTNYQYKPQPQQLYPSVPQISKTNDNGMGGHNGGVPPNFPQVNRSFNYQANHPISMEFGGVSNFQKSAKPLEEASSEDKETDDAIESLNKLSINEFKLDDVAKHKQMVDSVIAYLANMKKTIVANKEIETKSSPEDTYSASQLSEKEGLSRNLYPKIASF</sequence>
<name>PACC_DEBHA</name>
<gene>
    <name type="primary">RIM101</name>
    <name type="ordered locus">DEHA2D04796g</name>
</gene>
<reference key="1">
    <citation type="journal article" date="2004" name="Nature">
        <title>Genome evolution in yeasts.</title>
        <authorList>
            <person name="Dujon B."/>
            <person name="Sherman D."/>
            <person name="Fischer G."/>
            <person name="Durrens P."/>
            <person name="Casaregola S."/>
            <person name="Lafontaine I."/>
            <person name="de Montigny J."/>
            <person name="Marck C."/>
            <person name="Neuveglise C."/>
            <person name="Talla E."/>
            <person name="Goffard N."/>
            <person name="Frangeul L."/>
            <person name="Aigle M."/>
            <person name="Anthouard V."/>
            <person name="Babour A."/>
            <person name="Barbe V."/>
            <person name="Barnay S."/>
            <person name="Blanchin S."/>
            <person name="Beckerich J.-M."/>
            <person name="Beyne E."/>
            <person name="Bleykasten C."/>
            <person name="Boisrame A."/>
            <person name="Boyer J."/>
            <person name="Cattolico L."/>
            <person name="Confanioleri F."/>
            <person name="de Daruvar A."/>
            <person name="Despons L."/>
            <person name="Fabre E."/>
            <person name="Fairhead C."/>
            <person name="Ferry-Dumazet H."/>
            <person name="Groppi A."/>
            <person name="Hantraye F."/>
            <person name="Hennequin C."/>
            <person name="Jauniaux N."/>
            <person name="Joyet P."/>
            <person name="Kachouri R."/>
            <person name="Kerrest A."/>
            <person name="Koszul R."/>
            <person name="Lemaire M."/>
            <person name="Lesur I."/>
            <person name="Ma L."/>
            <person name="Muller H."/>
            <person name="Nicaud J.-M."/>
            <person name="Nikolski M."/>
            <person name="Oztas S."/>
            <person name="Ozier-Kalogeropoulos O."/>
            <person name="Pellenz S."/>
            <person name="Potier S."/>
            <person name="Richard G.-F."/>
            <person name="Straub M.-L."/>
            <person name="Suleau A."/>
            <person name="Swennen D."/>
            <person name="Tekaia F."/>
            <person name="Wesolowski-Louvel M."/>
            <person name="Westhof E."/>
            <person name="Wirth B."/>
            <person name="Zeniou-Meyer M."/>
            <person name="Zivanovic Y."/>
            <person name="Bolotin-Fukuhara M."/>
            <person name="Thierry A."/>
            <person name="Bouchier C."/>
            <person name="Caudron B."/>
            <person name="Scarpelli C."/>
            <person name="Gaillardin C."/>
            <person name="Weissenbach J."/>
            <person name="Wincker P."/>
            <person name="Souciet J.-L."/>
        </authorList>
    </citation>
    <scope>NUCLEOTIDE SEQUENCE [LARGE SCALE GENOMIC DNA]</scope>
    <source>
        <strain>ATCC 36239 / CBS 767 / BCRC 21394 / JCM 1990 / NBRC 0083 / IGC 2968</strain>
    </source>
</reference>
<accession>Q6BSZ4</accession>
<protein>
    <recommendedName>
        <fullName>pH-response transcription factor pacC/RIM101</fullName>
    </recommendedName>
</protein>
<comment type="function">
    <text evidence="1">Transcription factor that mediates regulation of both acid- and alkaline-expressed genes in response to ambient pH. At alkaline ambient pH, activates transcription of alkaline-expressed genes (including RIM101 itself) and represses transcription of acid-expressed genes (By similarity).</text>
</comment>
<comment type="subunit">
    <text evidence="1">Binds to DNA. Interacts with RIM20, which binds to the two YPX[LI] motifs and is required for proteolytic processing (By similarity).</text>
</comment>
<comment type="subcellular location">
    <subcellularLocation>
        <location evidence="1">Cytoplasm</location>
    </subcellularLocation>
    <subcellularLocation>
        <location evidence="1">Nucleus</location>
    </subcellularLocation>
</comment>
<comment type="PTM">
    <text evidence="1">Activated by C-terminal proteolytic cleavage by signaling protease (probably palB/RIM13) at neutral to alkaline ambient pH.</text>
</comment>
<comment type="similarity">
    <text evidence="5">Belongs to the pacC/RIM101 family.</text>
</comment>
<feature type="chain" id="PRO_0000046831" description="pH-response transcription factor pacC/RIM101">
    <location>
        <begin position="1"/>
        <end position="617"/>
    </location>
</feature>
<feature type="zinc finger region" description="C2H2-type 1" evidence="3">
    <location>
        <begin position="163"/>
        <end position="188"/>
    </location>
</feature>
<feature type="zinc finger region" description="C2H2-type 2" evidence="3">
    <location>
        <begin position="199"/>
        <end position="223"/>
    </location>
</feature>
<feature type="zinc finger region" description="C2H2-type 3" evidence="3">
    <location>
        <begin position="229"/>
        <end position="251"/>
    </location>
</feature>
<feature type="region of interest" description="Disordered" evidence="4">
    <location>
        <begin position="1"/>
        <end position="91"/>
    </location>
</feature>
<feature type="region of interest" description="Disordered" evidence="4">
    <location>
        <begin position="242"/>
        <end position="307"/>
    </location>
</feature>
<feature type="region of interest" description="Disordered" evidence="4">
    <location>
        <begin position="405"/>
        <end position="427"/>
    </location>
</feature>
<feature type="short sequence motif" description="YPX[LI] motif" evidence="2">
    <location>
        <begin position="471"/>
        <end position="474"/>
    </location>
</feature>
<feature type="short sequence motif" description="YPX[LI] motif">
    <location>
        <begin position="611"/>
        <end position="614"/>
    </location>
</feature>
<feature type="compositionally biased region" description="Low complexity" evidence="4">
    <location>
        <begin position="63"/>
        <end position="84"/>
    </location>
</feature>
<feature type="compositionally biased region" description="Basic and acidic residues" evidence="4">
    <location>
        <begin position="242"/>
        <end position="256"/>
    </location>
</feature>
<feature type="compositionally biased region" description="Basic and acidic residues" evidence="4">
    <location>
        <begin position="265"/>
        <end position="288"/>
    </location>
</feature>
<feature type="compositionally biased region" description="Low complexity" evidence="4">
    <location>
        <begin position="289"/>
        <end position="307"/>
    </location>
</feature>
<feature type="compositionally biased region" description="Low complexity" evidence="4">
    <location>
        <begin position="409"/>
        <end position="426"/>
    </location>
</feature>
<evidence type="ECO:0000250" key="1"/>
<evidence type="ECO:0000255" key="2"/>
<evidence type="ECO:0000255" key="3">
    <source>
        <dbReference type="PROSITE-ProRule" id="PRU00042"/>
    </source>
</evidence>
<evidence type="ECO:0000256" key="4">
    <source>
        <dbReference type="SAM" id="MobiDB-lite"/>
    </source>
</evidence>
<evidence type="ECO:0000305" key="5"/>
<keyword id="KW-0010">Activator</keyword>
<keyword id="KW-0963">Cytoplasm</keyword>
<keyword id="KW-0238">DNA-binding</keyword>
<keyword id="KW-0479">Metal-binding</keyword>
<keyword id="KW-0539">Nucleus</keyword>
<keyword id="KW-1185">Reference proteome</keyword>
<keyword id="KW-0677">Repeat</keyword>
<keyword id="KW-0678">Repressor</keyword>
<keyword id="KW-0804">Transcription</keyword>
<keyword id="KW-0805">Transcription regulation</keyword>
<keyword id="KW-0862">Zinc</keyword>
<keyword id="KW-0863">Zinc-finger</keyword>
<organism>
    <name type="scientific">Debaryomyces hansenii (strain ATCC 36239 / CBS 767 / BCRC 21394 / JCM 1990 / NBRC 0083 / IGC 2968)</name>
    <name type="common">Yeast</name>
    <name type="synonym">Torulaspora hansenii</name>
    <dbReference type="NCBI Taxonomy" id="284592"/>
    <lineage>
        <taxon>Eukaryota</taxon>
        <taxon>Fungi</taxon>
        <taxon>Dikarya</taxon>
        <taxon>Ascomycota</taxon>
        <taxon>Saccharomycotina</taxon>
        <taxon>Pichiomycetes</taxon>
        <taxon>Debaryomycetaceae</taxon>
        <taxon>Debaryomyces</taxon>
    </lineage>
</organism>